<accession>P0AD32</accession>
<accession>P14008</accession>
<sequence length="269" mass="28643">METFNSLFMVSPLLLGVLFFVAMLAGFIDSIAGGGGLLTIPALMAAGMSPANALATNKLQACGGSISATIYFIRRKVVSLSDQKLNIAMTFVGSMSGALLVQYVQADVLRQILPILVICIGLYFLLMPKLGEEDRQRRMYGLPFALIAGGCVGFYDGFFGPAAGSFYALAFVTLCGFNLAKATAHAKLLNATSNIGGLLLFILGGKVIWATGFVMLVGQFLGARMGSRLVLSKGQKLIRPMIVIVSAVMSAKLLYDSHGQEILHWLGMN</sequence>
<dbReference type="EMBL" id="AE005174">
    <property type="protein sequence ID" value="AAG57456.1"/>
    <property type="molecule type" value="Genomic_DNA"/>
</dbReference>
<dbReference type="EMBL" id="BA000007">
    <property type="protein sequence ID" value="BAB36634.1"/>
    <property type="molecule type" value="Genomic_DNA"/>
</dbReference>
<dbReference type="PIR" id="C91030">
    <property type="entry name" value="C91030"/>
</dbReference>
<dbReference type="PIR" id="D85874">
    <property type="entry name" value="D85874"/>
</dbReference>
<dbReference type="RefSeq" id="NP_311238.1">
    <property type="nucleotide sequence ID" value="NC_002695.1"/>
</dbReference>
<dbReference type="RefSeq" id="WP_000447361.1">
    <property type="nucleotide sequence ID" value="NZ_VOAI01000001.1"/>
</dbReference>
<dbReference type="STRING" id="155864.Z3590"/>
<dbReference type="GeneID" id="915693"/>
<dbReference type="KEGG" id="ece:Z3590"/>
<dbReference type="KEGG" id="ecs:ECs_3211"/>
<dbReference type="PATRIC" id="fig|386585.9.peg.3352"/>
<dbReference type="eggNOG" id="COG0730">
    <property type="taxonomic scope" value="Bacteria"/>
</dbReference>
<dbReference type="HOGENOM" id="CLU_045498_2_1_6"/>
<dbReference type="OMA" id="WYFVRNG"/>
<dbReference type="Proteomes" id="UP000000558">
    <property type="component" value="Chromosome"/>
</dbReference>
<dbReference type="Proteomes" id="UP000002519">
    <property type="component" value="Chromosome"/>
</dbReference>
<dbReference type="GO" id="GO:0005886">
    <property type="term" value="C:plasma membrane"/>
    <property type="evidence" value="ECO:0007669"/>
    <property type="project" value="UniProtKB-SubCell"/>
</dbReference>
<dbReference type="InterPro" id="IPR002781">
    <property type="entry name" value="TM_pro_TauE-like"/>
</dbReference>
<dbReference type="InterPro" id="IPR052017">
    <property type="entry name" value="TSUP"/>
</dbReference>
<dbReference type="NCBIfam" id="NF007909">
    <property type="entry name" value="PRK10621.1"/>
    <property type="match status" value="1"/>
</dbReference>
<dbReference type="PANTHER" id="PTHR30269:SF0">
    <property type="entry name" value="MEMBRANE TRANSPORTER PROTEIN YFCA-RELATED"/>
    <property type="match status" value="1"/>
</dbReference>
<dbReference type="PANTHER" id="PTHR30269">
    <property type="entry name" value="TRANSMEMBRANE PROTEIN YFCA"/>
    <property type="match status" value="1"/>
</dbReference>
<dbReference type="Pfam" id="PF01925">
    <property type="entry name" value="TauE"/>
    <property type="match status" value="1"/>
</dbReference>
<reference key="1">
    <citation type="journal article" date="2001" name="Nature">
        <title>Genome sequence of enterohaemorrhagic Escherichia coli O157:H7.</title>
        <authorList>
            <person name="Perna N.T."/>
            <person name="Plunkett G. III"/>
            <person name="Burland V."/>
            <person name="Mau B."/>
            <person name="Glasner J.D."/>
            <person name="Rose D.J."/>
            <person name="Mayhew G.F."/>
            <person name="Evans P.S."/>
            <person name="Gregor J."/>
            <person name="Kirkpatrick H.A."/>
            <person name="Posfai G."/>
            <person name="Hackett J."/>
            <person name="Klink S."/>
            <person name="Boutin A."/>
            <person name="Shao Y."/>
            <person name="Miller L."/>
            <person name="Grotbeck E.J."/>
            <person name="Davis N.W."/>
            <person name="Lim A."/>
            <person name="Dimalanta E.T."/>
            <person name="Potamousis K."/>
            <person name="Apodaca J."/>
            <person name="Anantharaman T.S."/>
            <person name="Lin J."/>
            <person name="Yen G."/>
            <person name="Schwartz D.C."/>
            <person name="Welch R.A."/>
            <person name="Blattner F.R."/>
        </authorList>
    </citation>
    <scope>NUCLEOTIDE SEQUENCE [LARGE SCALE GENOMIC DNA]</scope>
    <source>
        <strain>O157:H7 / EDL933 / ATCC 700927 / EHEC</strain>
    </source>
</reference>
<reference key="2">
    <citation type="journal article" date="2001" name="DNA Res.">
        <title>Complete genome sequence of enterohemorrhagic Escherichia coli O157:H7 and genomic comparison with a laboratory strain K-12.</title>
        <authorList>
            <person name="Hayashi T."/>
            <person name="Makino K."/>
            <person name="Ohnishi M."/>
            <person name="Kurokawa K."/>
            <person name="Ishii K."/>
            <person name="Yokoyama K."/>
            <person name="Han C.-G."/>
            <person name="Ohtsubo E."/>
            <person name="Nakayama K."/>
            <person name="Murata T."/>
            <person name="Tanaka M."/>
            <person name="Tobe T."/>
            <person name="Iida T."/>
            <person name="Takami H."/>
            <person name="Honda T."/>
            <person name="Sasakawa C."/>
            <person name="Ogasawara N."/>
            <person name="Yasunaga T."/>
            <person name="Kuhara S."/>
            <person name="Shiba T."/>
            <person name="Hattori M."/>
            <person name="Shinagawa H."/>
        </authorList>
    </citation>
    <scope>NUCLEOTIDE SEQUENCE [LARGE SCALE GENOMIC DNA]</scope>
    <source>
        <strain>O157:H7 / Sakai / RIMD 0509952 / EHEC</strain>
    </source>
</reference>
<protein>
    <recommendedName>
        <fullName>Probable membrane transporter protein YfcA</fullName>
    </recommendedName>
</protein>
<gene>
    <name type="primary">yfcA</name>
    <name type="ordered locus">Z3590</name>
    <name type="ordered locus">ECs3211</name>
</gene>
<comment type="subcellular location">
    <subcellularLocation>
        <location evidence="1">Cell inner membrane</location>
        <topology evidence="1">Multi-pass membrane protein</topology>
    </subcellularLocation>
</comment>
<comment type="similarity">
    <text evidence="3">Belongs to the 4-toluene sulfonate uptake permease (TSUP) (TC 2.A.102) family.</text>
</comment>
<organism>
    <name type="scientific">Escherichia coli O157:H7</name>
    <dbReference type="NCBI Taxonomy" id="83334"/>
    <lineage>
        <taxon>Bacteria</taxon>
        <taxon>Pseudomonadati</taxon>
        <taxon>Pseudomonadota</taxon>
        <taxon>Gammaproteobacteria</taxon>
        <taxon>Enterobacterales</taxon>
        <taxon>Enterobacteriaceae</taxon>
        <taxon>Escherichia</taxon>
    </lineage>
</organism>
<proteinExistence type="inferred from homology"/>
<evidence type="ECO:0000250" key="1"/>
<evidence type="ECO:0000255" key="2"/>
<evidence type="ECO:0000305" key="3"/>
<keyword id="KW-0997">Cell inner membrane</keyword>
<keyword id="KW-1003">Cell membrane</keyword>
<keyword id="KW-0472">Membrane</keyword>
<keyword id="KW-1185">Reference proteome</keyword>
<keyword id="KW-0812">Transmembrane</keyword>
<keyword id="KW-1133">Transmembrane helix</keyword>
<keyword id="KW-0813">Transport</keyword>
<feature type="chain" id="PRO_0000169188" description="Probable membrane transporter protein YfcA">
    <location>
        <begin position="1"/>
        <end position="269"/>
    </location>
</feature>
<feature type="topological domain" description="Periplasmic" evidence="2">
    <location>
        <begin position="1"/>
        <end position="7"/>
    </location>
</feature>
<feature type="transmembrane region" description="Helical" evidence="2">
    <location>
        <begin position="8"/>
        <end position="28"/>
    </location>
</feature>
<feature type="topological domain" description="Cytoplasmic" evidence="2">
    <location>
        <begin position="29"/>
        <end position="30"/>
    </location>
</feature>
<feature type="transmembrane region" description="Helical" evidence="2">
    <location>
        <begin position="31"/>
        <end position="51"/>
    </location>
</feature>
<feature type="topological domain" description="Periplasmic" evidence="2">
    <location>
        <begin position="52"/>
        <end position="84"/>
    </location>
</feature>
<feature type="transmembrane region" description="Helical" evidence="2">
    <location>
        <begin position="85"/>
        <end position="105"/>
    </location>
</feature>
<feature type="topological domain" description="Cytoplasmic" evidence="2">
    <location>
        <begin position="106"/>
        <end position="111"/>
    </location>
</feature>
<feature type="transmembrane region" description="Helical" evidence="2">
    <location>
        <begin position="112"/>
        <end position="132"/>
    </location>
</feature>
<feature type="topological domain" description="Periplasmic" evidence="2">
    <location>
        <begin position="133"/>
        <end position="156"/>
    </location>
</feature>
<feature type="transmembrane region" description="Helical" evidence="2">
    <location>
        <begin position="157"/>
        <end position="177"/>
    </location>
</feature>
<feature type="topological domain" description="Cytoplasmic" evidence="2">
    <location>
        <begin position="178"/>
        <end position="197"/>
    </location>
</feature>
<feature type="transmembrane region" description="Helical" evidence="2">
    <location>
        <begin position="198"/>
        <end position="218"/>
    </location>
</feature>
<feature type="topological domain" description="Periplasmic" evidence="2">
    <location>
        <begin position="219"/>
        <end position="269"/>
    </location>
</feature>
<name>YFCA_ECO57</name>